<reference key="1">
    <citation type="journal article" date="1986" name="EMBO J.">
        <title>The Ace locus of Drosophila melanogaster: structural gene for acetylcholinesterase with an unusual 5' leader.</title>
        <authorList>
            <person name="Hall L.M.C."/>
            <person name="Spierer P."/>
        </authorList>
    </citation>
    <scope>NUCLEOTIDE SEQUENCE [MRNA]</scope>
</reference>
<reference key="2">
    <citation type="journal article" date="1989" name="J. Mol. Biol.">
        <title>Drosophila melanogaster acetylcholinesterase gene. Structure, evolution and mutations.</title>
        <authorList>
            <person name="Fournier D."/>
            <person name="Karch F."/>
            <person name="Bride J.-M."/>
            <person name="Hall L.M.C."/>
            <person name="Berge J.-B."/>
            <person name="Spierer P."/>
        </authorList>
    </citation>
    <scope>NUCLEOTIDE SEQUENCE [GENOMIC DNA]</scope>
    <source>
        <strain>Canton-S</strain>
        <strain>MH19</strain>
        <strain>Oregon-R</strain>
        <tissue>Embryo</tissue>
        <tissue>Pupae</tissue>
    </source>
</reference>
<reference key="3">
    <citation type="journal article" date="2000" name="Science">
        <title>The genome sequence of Drosophila melanogaster.</title>
        <authorList>
            <person name="Adams M.D."/>
            <person name="Celniker S.E."/>
            <person name="Holt R.A."/>
            <person name="Evans C.A."/>
            <person name="Gocayne J.D."/>
            <person name="Amanatides P.G."/>
            <person name="Scherer S.E."/>
            <person name="Li P.W."/>
            <person name="Hoskins R.A."/>
            <person name="Galle R.F."/>
            <person name="George R.A."/>
            <person name="Lewis S.E."/>
            <person name="Richards S."/>
            <person name="Ashburner M."/>
            <person name="Henderson S.N."/>
            <person name="Sutton G.G."/>
            <person name="Wortman J.R."/>
            <person name="Yandell M.D."/>
            <person name="Zhang Q."/>
            <person name="Chen L.X."/>
            <person name="Brandon R.C."/>
            <person name="Rogers Y.-H.C."/>
            <person name="Blazej R.G."/>
            <person name="Champe M."/>
            <person name="Pfeiffer B.D."/>
            <person name="Wan K.H."/>
            <person name="Doyle C."/>
            <person name="Baxter E.G."/>
            <person name="Helt G."/>
            <person name="Nelson C.R."/>
            <person name="Miklos G.L.G."/>
            <person name="Abril J.F."/>
            <person name="Agbayani A."/>
            <person name="An H.-J."/>
            <person name="Andrews-Pfannkoch C."/>
            <person name="Baldwin D."/>
            <person name="Ballew R.M."/>
            <person name="Basu A."/>
            <person name="Baxendale J."/>
            <person name="Bayraktaroglu L."/>
            <person name="Beasley E.M."/>
            <person name="Beeson K.Y."/>
            <person name="Benos P.V."/>
            <person name="Berman B.P."/>
            <person name="Bhandari D."/>
            <person name="Bolshakov S."/>
            <person name="Borkova D."/>
            <person name="Botchan M.R."/>
            <person name="Bouck J."/>
            <person name="Brokstein P."/>
            <person name="Brottier P."/>
            <person name="Burtis K.C."/>
            <person name="Busam D.A."/>
            <person name="Butler H."/>
            <person name="Cadieu E."/>
            <person name="Center A."/>
            <person name="Chandra I."/>
            <person name="Cherry J.M."/>
            <person name="Cawley S."/>
            <person name="Dahlke C."/>
            <person name="Davenport L.B."/>
            <person name="Davies P."/>
            <person name="de Pablos B."/>
            <person name="Delcher A."/>
            <person name="Deng Z."/>
            <person name="Mays A.D."/>
            <person name="Dew I."/>
            <person name="Dietz S.M."/>
            <person name="Dodson K."/>
            <person name="Doup L.E."/>
            <person name="Downes M."/>
            <person name="Dugan-Rocha S."/>
            <person name="Dunkov B.C."/>
            <person name="Dunn P."/>
            <person name="Durbin K.J."/>
            <person name="Evangelista C.C."/>
            <person name="Ferraz C."/>
            <person name="Ferriera S."/>
            <person name="Fleischmann W."/>
            <person name="Fosler C."/>
            <person name="Gabrielian A.E."/>
            <person name="Garg N.S."/>
            <person name="Gelbart W.M."/>
            <person name="Glasser K."/>
            <person name="Glodek A."/>
            <person name="Gong F."/>
            <person name="Gorrell J.H."/>
            <person name="Gu Z."/>
            <person name="Guan P."/>
            <person name="Harris M."/>
            <person name="Harris N.L."/>
            <person name="Harvey D.A."/>
            <person name="Heiman T.J."/>
            <person name="Hernandez J.R."/>
            <person name="Houck J."/>
            <person name="Hostin D."/>
            <person name="Houston K.A."/>
            <person name="Howland T.J."/>
            <person name="Wei M.-H."/>
            <person name="Ibegwam C."/>
            <person name="Jalali M."/>
            <person name="Kalush F."/>
            <person name="Karpen G.H."/>
            <person name="Ke Z."/>
            <person name="Kennison J.A."/>
            <person name="Ketchum K.A."/>
            <person name="Kimmel B.E."/>
            <person name="Kodira C.D."/>
            <person name="Kraft C.L."/>
            <person name="Kravitz S."/>
            <person name="Kulp D."/>
            <person name="Lai Z."/>
            <person name="Lasko P."/>
            <person name="Lei Y."/>
            <person name="Levitsky A.A."/>
            <person name="Li J.H."/>
            <person name="Li Z."/>
            <person name="Liang Y."/>
            <person name="Lin X."/>
            <person name="Liu X."/>
            <person name="Mattei B."/>
            <person name="McIntosh T.C."/>
            <person name="McLeod M.P."/>
            <person name="McPherson D."/>
            <person name="Merkulov G."/>
            <person name="Milshina N.V."/>
            <person name="Mobarry C."/>
            <person name="Morris J."/>
            <person name="Moshrefi A."/>
            <person name="Mount S.M."/>
            <person name="Moy M."/>
            <person name="Murphy B."/>
            <person name="Murphy L."/>
            <person name="Muzny D.M."/>
            <person name="Nelson D.L."/>
            <person name="Nelson D.R."/>
            <person name="Nelson K.A."/>
            <person name="Nixon K."/>
            <person name="Nusskern D.R."/>
            <person name="Pacleb J.M."/>
            <person name="Palazzolo M."/>
            <person name="Pittman G.S."/>
            <person name="Pan S."/>
            <person name="Pollard J."/>
            <person name="Puri V."/>
            <person name="Reese M.G."/>
            <person name="Reinert K."/>
            <person name="Remington K."/>
            <person name="Saunders R.D.C."/>
            <person name="Scheeler F."/>
            <person name="Shen H."/>
            <person name="Shue B.C."/>
            <person name="Siden-Kiamos I."/>
            <person name="Simpson M."/>
            <person name="Skupski M.P."/>
            <person name="Smith T.J."/>
            <person name="Spier E."/>
            <person name="Spradling A.C."/>
            <person name="Stapleton M."/>
            <person name="Strong R."/>
            <person name="Sun E."/>
            <person name="Svirskas R."/>
            <person name="Tector C."/>
            <person name="Turner R."/>
            <person name="Venter E."/>
            <person name="Wang A.H."/>
            <person name="Wang X."/>
            <person name="Wang Z.-Y."/>
            <person name="Wassarman D.A."/>
            <person name="Weinstock G.M."/>
            <person name="Weissenbach J."/>
            <person name="Williams S.M."/>
            <person name="Woodage T."/>
            <person name="Worley K.C."/>
            <person name="Wu D."/>
            <person name="Yang S."/>
            <person name="Yao Q.A."/>
            <person name="Ye J."/>
            <person name="Yeh R.-F."/>
            <person name="Zaveri J.S."/>
            <person name="Zhan M."/>
            <person name="Zhang G."/>
            <person name="Zhao Q."/>
            <person name="Zheng L."/>
            <person name="Zheng X.H."/>
            <person name="Zhong F.N."/>
            <person name="Zhong W."/>
            <person name="Zhou X."/>
            <person name="Zhu S.C."/>
            <person name="Zhu X."/>
            <person name="Smith H.O."/>
            <person name="Gibbs R.A."/>
            <person name="Myers E.W."/>
            <person name="Rubin G.M."/>
            <person name="Venter J.C."/>
        </authorList>
    </citation>
    <scope>NUCLEOTIDE SEQUENCE [LARGE SCALE GENOMIC DNA]</scope>
    <source>
        <strain>Berkeley</strain>
    </source>
</reference>
<reference key="4">
    <citation type="journal article" date="2002" name="Genome Biol.">
        <title>Annotation of the Drosophila melanogaster euchromatic genome: a systematic review.</title>
        <authorList>
            <person name="Misra S."/>
            <person name="Crosby M.A."/>
            <person name="Mungall C.J."/>
            <person name="Matthews B.B."/>
            <person name="Campbell K.S."/>
            <person name="Hradecky P."/>
            <person name="Huang Y."/>
            <person name="Kaminker J.S."/>
            <person name="Millburn G.H."/>
            <person name="Prochnik S.E."/>
            <person name="Smith C.D."/>
            <person name="Tupy J.L."/>
            <person name="Whitfield E.J."/>
            <person name="Bayraktaroglu L."/>
            <person name="Berman B.P."/>
            <person name="Bettencourt B.R."/>
            <person name="Celniker S.E."/>
            <person name="de Grey A.D.N.J."/>
            <person name="Drysdale R.A."/>
            <person name="Harris N.L."/>
            <person name="Richter J."/>
            <person name="Russo S."/>
            <person name="Schroeder A.J."/>
            <person name="Shu S.Q."/>
            <person name="Stapleton M."/>
            <person name="Yamada C."/>
            <person name="Ashburner M."/>
            <person name="Gelbart W.M."/>
            <person name="Rubin G.M."/>
            <person name="Lewis S.E."/>
        </authorList>
    </citation>
    <scope>GENOME REANNOTATION</scope>
    <source>
        <strain>Berkeley</strain>
    </source>
</reference>
<reference key="5">
    <citation type="journal article" date="1988" name="FEBS Lett.">
        <title>Acetylcholinesterase from Drosophila melanogaster. Identification of two subunits encoded by the same gene.</title>
        <authorList>
            <person name="Fournier D."/>
            <person name="Bride J.-M."/>
            <person name="Karsch F."/>
            <person name="Berge J.-B."/>
        </authorList>
    </citation>
    <scope>SUBUNIT</scope>
</reference>
<reference key="6">
    <citation type="journal article" date="1988" name="Biochemistry">
        <title>Drosophila acetylcholinesterase: demonstration of a glycoinositol phospholipid anchor and an endogenous proteolytic cleavage.</title>
        <authorList>
            <person name="Haas R."/>
            <person name="Marshall T.L."/>
            <person name="Rosenberry T.L."/>
        </authorList>
    </citation>
    <scope>PROTEOLYTIC PROCESSING</scope>
    <scope>GPI-ANCHOR</scope>
    <scope>PROTEIN SEQUENCE OF 40-43</scope>
</reference>
<reference key="7">
    <citation type="journal article" date="1988" name="J. Neurochem.">
        <title>Acetylcholinesterases from Musca domestica and Drosophila melanogaster brain are linked to membranes by a glycophospholipid anchor sensitive to an endogenous phospholipase.</title>
        <authorList>
            <person name="Fournier D."/>
            <person name="Berge J.-B."/>
            <person name="Cardoso de Almeida M.L."/>
            <person name="Bordier C."/>
        </authorList>
    </citation>
    <scope>GPI-ANCHOR</scope>
</reference>
<reference key="8">
    <citation type="journal article" date="1992" name="J. Biol. Chem.">
        <title>Post-translational modifications of Drosophila acetylcholinesterase. In vitro mutagenesis and expression in Xenopus oocytes.</title>
        <authorList>
            <person name="Mutero A."/>
            <person name="Fournier D."/>
        </authorList>
    </citation>
    <scope>GLYCOSYLATION AT ASN-126; ASN-174; ASN-331 AND ASN-531</scope>
    <scope>LACK OF GLYCOSYLATION AT ASN-569</scope>
    <scope>INTERCHAIN AT CYS-615</scope>
    <scope>MUTAGENESIS OF ASN-126; ASN-174; CYS-328; ASN-331; ASN-531; ASN-569 AND CYS-615</scope>
</reference>
<reference key="9">
    <citation type="journal article" date="2000" name="Protein Sci.">
        <title>Three-dimensional structures of Drosophila melanogaster acetylcholinesterase and of its complexes with two potent inhibitors.</title>
        <authorList>
            <person name="Harel M."/>
            <person name="Kryger G."/>
            <person name="Rosenberry T.L."/>
            <person name="Mallender W.D."/>
            <person name="Lewis T."/>
            <person name="Fletcher R.J."/>
            <person name="Guss J.M."/>
            <person name="Silman I."/>
            <person name="Sussman J.L."/>
        </authorList>
    </citation>
    <scope>X-RAY CRYSTALLOGRAPHY (2.7 ANGSTROMS) OF 41-623 IN COMPLEX WITH INHIBITOR</scope>
</reference>
<proteinExistence type="evidence at protein level"/>
<organism>
    <name type="scientific">Drosophila melanogaster</name>
    <name type="common">Fruit fly</name>
    <dbReference type="NCBI Taxonomy" id="7227"/>
    <lineage>
        <taxon>Eukaryota</taxon>
        <taxon>Metazoa</taxon>
        <taxon>Ecdysozoa</taxon>
        <taxon>Arthropoda</taxon>
        <taxon>Hexapoda</taxon>
        <taxon>Insecta</taxon>
        <taxon>Pterygota</taxon>
        <taxon>Neoptera</taxon>
        <taxon>Endopterygota</taxon>
        <taxon>Diptera</taxon>
        <taxon>Brachycera</taxon>
        <taxon>Muscomorpha</taxon>
        <taxon>Ephydroidea</taxon>
        <taxon>Drosophilidae</taxon>
        <taxon>Drosophila</taxon>
        <taxon>Sophophora</taxon>
    </lineage>
</organism>
<name>ACES_DROME</name>
<dbReference type="EC" id="3.1.1.7"/>
<dbReference type="EMBL" id="X05893">
    <property type="protein sequence ID" value="CAA29326.1"/>
    <property type="molecule type" value="mRNA"/>
</dbReference>
<dbReference type="EMBL" id="AE014297">
    <property type="protein sequence ID" value="AAF54915.1"/>
    <property type="molecule type" value="Genomic_DNA"/>
</dbReference>
<dbReference type="PIR" id="A25363">
    <property type="entry name" value="A25363"/>
</dbReference>
<dbReference type="RefSeq" id="NP_001163600.1">
    <property type="nucleotide sequence ID" value="NM_001170129.2"/>
</dbReference>
<dbReference type="RefSeq" id="NP_476953.1">
    <property type="nucleotide sequence ID" value="NM_057605.5"/>
</dbReference>
<dbReference type="PDB" id="6XYS">
    <property type="method" value="X-ray"/>
    <property type="resolution" value="2.46 A"/>
    <property type="chains" value="A=39-619"/>
</dbReference>
<dbReference type="PDB" id="6XYU">
    <property type="method" value="X-ray"/>
    <property type="resolution" value="2.51 A"/>
    <property type="chains" value="A=39-619"/>
</dbReference>
<dbReference type="PDB" id="6XYY">
    <property type="method" value="X-ray"/>
    <property type="resolution" value="2.70 A"/>
    <property type="chains" value="A=39-619"/>
</dbReference>
<dbReference type="PDBsum" id="6XYS"/>
<dbReference type="PDBsum" id="6XYU"/>
<dbReference type="PDBsum" id="6XYY"/>
<dbReference type="SMR" id="P07140"/>
<dbReference type="BioGRID" id="66709">
    <property type="interactions" value="9"/>
</dbReference>
<dbReference type="FunCoup" id="P07140">
    <property type="interactions" value="76"/>
</dbReference>
<dbReference type="STRING" id="7227.FBpp0082248"/>
<dbReference type="BindingDB" id="P07140"/>
<dbReference type="ChEMBL" id="CHEMBL2242744"/>
<dbReference type="ESTHER" id="drome-ACHE">
    <property type="family name" value="ACHE"/>
</dbReference>
<dbReference type="MEROPS" id="S09.980"/>
<dbReference type="GlyCosmos" id="P07140">
    <property type="glycosylation" value="4 sites, No reported glycans"/>
</dbReference>
<dbReference type="GlyGen" id="P07140">
    <property type="glycosylation" value="4 sites"/>
</dbReference>
<dbReference type="iPTMnet" id="P07140"/>
<dbReference type="PaxDb" id="7227-FBpp0289713"/>
<dbReference type="GeneID" id="41625"/>
<dbReference type="KEGG" id="dme:Dmel_CG17907"/>
<dbReference type="AGR" id="FB:FBgn0000024"/>
<dbReference type="CTD" id="1636"/>
<dbReference type="FlyBase" id="FBgn0000024">
    <property type="gene designation" value="Ace"/>
</dbReference>
<dbReference type="VEuPathDB" id="VectorBase:FBgn0000024"/>
<dbReference type="eggNOG" id="KOG4389">
    <property type="taxonomic scope" value="Eukaryota"/>
</dbReference>
<dbReference type="InParanoid" id="P07140"/>
<dbReference type="OrthoDB" id="9000293at2759"/>
<dbReference type="PhylomeDB" id="P07140"/>
<dbReference type="BRENDA" id="3.1.1.7">
    <property type="organism ID" value="1994"/>
</dbReference>
<dbReference type="Reactome" id="R-DME-112311">
    <property type="pathway name" value="Neurotransmitter clearance"/>
</dbReference>
<dbReference type="Reactome" id="R-DME-1483191">
    <property type="pathway name" value="Synthesis of PC"/>
</dbReference>
<dbReference type="Reactome" id="R-DME-9749641">
    <property type="pathway name" value="Aspirin ADME"/>
</dbReference>
<dbReference type="BioGRID-ORCS" id="41625">
    <property type="hits" value="0 hits in 3 CRISPR screens"/>
</dbReference>
<dbReference type="GenomeRNAi" id="41625"/>
<dbReference type="PRO" id="PR:P07140"/>
<dbReference type="Proteomes" id="UP000000803">
    <property type="component" value="Chromosome 3R"/>
</dbReference>
<dbReference type="ExpressionAtlas" id="P07140">
    <property type="expression patterns" value="baseline and differential"/>
</dbReference>
<dbReference type="GO" id="GO:0005737">
    <property type="term" value="C:cytoplasm"/>
    <property type="evidence" value="ECO:0000314"/>
    <property type="project" value="FlyBase"/>
</dbReference>
<dbReference type="GO" id="GO:0005615">
    <property type="term" value="C:extracellular space"/>
    <property type="evidence" value="ECO:0000318"/>
    <property type="project" value="GO_Central"/>
</dbReference>
<dbReference type="GO" id="GO:0005886">
    <property type="term" value="C:plasma membrane"/>
    <property type="evidence" value="ECO:0000314"/>
    <property type="project" value="FlyBase"/>
</dbReference>
<dbReference type="GO" id="GO:0098552">
    <property type="term" value="C:side of membrane"/>
    <property type="evidence" value="ECO:0007669"/>
    <property type="project" value="UniProtKB-KW"/>
</dbReference>
<dbReference type="GO" id="GO:0045202">
    <property type="term" value="C:synapse"/>
    <property type="evidence" value="ECO:0007669"/>
    <property type="project" value="UniProtKB-SubCell"/>
</dbReference>
<dbReference type="GO" id="GO:0043083">
    <property type="term" value="C:synaptic cleft"/>
    <property type="evidence" value="ECO:0007669"/>
    <property type="project" value="GOC"/>
</dbReference>
<dbReference type="GO" id="GO:0003990">
    <property type="term" value="F:acetylcholinesterase activity"/>
    <property type="evidence" value="ECO:0000314"/>
    <property type="project" value="FlyBase"/>
</dbReference>
<dbReference type="GO" id="GO:0004104">
    <property type="term" value="F:cholinesterase activity"/>
    <property type="evidence" value="ECO:0000314"/>
    <property type="project" value="FlyBase"/>
</dbReference>
<dbReference type="GO" id="GO:0042803">
    <property type="term" value="F:protein homodimerization activity"/>
    <property type="evidence" value="ECO:0000314"/>
    <property type="project" value="CAFA"/>
</dbReference>
<dbReference type="GO" id="GO:0017171">
    <property type="term" value="F:serine hydrolase activity"/>
    <property type="evidence" value="ECO:0007005"/>
    <property type="project" value="FlyBase"/>
</dbReference>
<dbReference type="GO" id="GO:0043199">
    <property type="term" value="F:sulfate binding"/>
    <property type="evidence" value="ECO:0000314"/>
    <property type="project" value="CAFA"/>
</dbReference>
<dbReference type="GO" id="GO:0006581">
    <property type="term" value="P:acetylcholine catabolic process"/>
    <property type="evidence" value="ECO:0000314"/>
    <property type="project" value="FlyBase"/>
</dbReference>
<dbReference type="GO" id="GO:0001507">
    <property type="term" value="P:acetylcholine catabolic process in synaptic cleft"/>
    <property type="evidence" value="ECO:0007669"/>
    <property type="project" value="InterPro"/>
</dbReference>
<dbReference type="GO" id="GO:0007268">
    <property type="term" value="P:chemical synaptic transmission"/>
    <property type="evidence" value="ECO:0000315"/>
    <property type="project" value="FlyBase"/>
</dbReference>
<dbReference type="GO" id="GO:0042426">
    <property type="term" value="P:choline catabolic process"/>
    <property type="evidence" value="ECO:0000314"/>
    <property type="project" value="FlyBase"/>
</dbReference>
<dbReference type="GO" id="GO:0019695">
    <property type="term" value="P:choline metabolic process"/>
    <property type="evidence" value="ECO:0000318"/>
    <property type="project" value="GO_Central"/>
</dbReference>
<dbReference type="DisProt" id="DP00346"/>
<dbReference type="FunFam" id="3.40.50.1820:FF:000029">
    <property type="entry name" value="Acetylcholinesterase"/>
    <property type="match status" value="1"/>
</dbReference>
<dbReference type="Gene3D" id="3.40.50.1820">
    <property type="entry name" value="alpha/beta hydrolase"/>
    <property type="match status" value="1"/>
</dbReference>
<dbReference type="InterPro" id="IPR029058">
    <property type="entry name" value="AB_hydrolase_fold"/>
</dbReference>
<dbReference type="InterPro" id="IPR050654">
    <property type="entry name" value="AChE-related_enzymes"/>
</dbReference>
<dbReference type="InterPro" id="IPR001445">
    <property type="entry name" value="Acylcholinesterase_insect"/>
</dbReference>
<dbReference type="InterPro" id="IPR002018">
    <property type="entry name" value="CarbesteraseB"/>
</dbReference>
<dbReference type="InterPro" id="IPR019826">
    <property type="entry name" value="Carboxylesterase_B_AS"/>
</dbReference>
<dbReference type="InterPro" id="IPR019819">
    <property type="entry name" value="Carboxylesterase_B_CS"/>
</dbReference>
<dbReference type="InterPro" id="IPR000997">
    <property type="entry name" value="Cholinesterase"/>
</dbReference>
<dbReference type="PANTHER" id="PTHR43918">
    <property type="entry name" value="ACETYLCHOLINESTERASE"/>
    <property type="match status" value="1"/>
</dbReference>
<dbReference type="PANTHER" id="PTHR43918:SF13">
    <property type="entry name" value="ACETYLCHOLINESTERASE"/>
    <property type="match status" value="1"/>
</dbReference>
<dbReference type="Pfam" id="PF00135">
    <property type="entry name" value="COesterase"/>
    <property type="match status" value="1"/>
</dbReference>
<dbReference type="PRINTS" id="PR00880">
    <property type="entry name" value="ACHEINSECT"/>
</dbReference>
<dbReference type="PRINTS" id="PR00878">
    <property type="entry name" value="CHOLNESTRASE"/>
</dbReference>
<dbReference type="SUPFAM" id="SSF53474">
    <property type="entry name" value="alpha/beta-Hydrolases"/>
    <property type="match status" value="1"/>
</dbReference>
<dbReference type="PROSITE" id="PS00122">
    <property type="entry name" value="CARBOXYLESTERASE_B_1"/>
    <property type="match status" value="1"/>
</dbReference>
<dbReference type="PROSITE" id="PS00941">
    <property type="entry name" value="CARBOXYLESTERASE_B_2"/>
    <property type="match status" value="1"/>
</dbReference>
<sequence length="649" mass="71785">MAISCRQSRVLPMSLPLPLTIPLPLVLVLSLHLSGVCGVIDRLVVQTSSGPVRGRSVTVQGREVHVYTGIPYAKPPVEDLRFRKPVPAEPWHGVLDATGLSATCVQERYEYFPGFSGEEIWNPNTNVSEDCLYINVWAPAKARLRHGRGANGGEHPNGKQADTDHLIHNGNPQNTTNGLPILIWIYGGGFMTGSATLDIYNADIMAAVGNVIVASFQYRVGAFGFLHLAPEMPSEFAEEAPGNVGLWDQALAIRWLKDNAHAFGGNPEWMTLFGESAGSSSVNAQLMSPVTRGLVKRGMMQSGTMNAPWSHMTSEKAVEIGKALINDCNCNASMLKTNPAHVMSCMRSVDAKTISVQQWNSYSGILSFPSAPTIDGAFLPADPMTLMKTADLKDYDILMGNVRDEGTYFLLYDFIDYFDKDDATALPRDKYLEIMNNIFGKATQAEREAIIFQYTSWEGNPGYQNQQQIGRAVGDHFFTCPTNEYAQALAERGASVHYYYFTHRTSTSLWGEWMGVLHGDEIEYFFGQPLNNSLQYRPVERELGKRMLSAVIEFAKTGNPAQDGEEWPNFSKEDPVYYIFSTDDKIEKLARGPLAARCSFWNDYLPKVRSWAGTCDGDSGSASISPRLQLLGIAALIYICAALRTKRVF</sequence>
<evidence type="ECO:0000255" key="1"/>
<evidence type="ECO:0000269" key="2">
    <source>
    </source>
</evidence>
<evidence type="ECO:0000269" key="3">
    <source>
    </source>
</evidence>
<evidence type="ECO:0000269" key="4">
    <source>
    </source>
</evidence>
<evidence type="ECO:0000269" key="5">
    <source>
    </source>
</evidence>
<evidence type="ECO:0000305" key="6"/>
<evidence type="ECO:0007829" key="7">
    <source>
        <dbReference type="PDB" id="6XYS"/>
    </source>
</evidence>
<evidence type="ECO:0007829" key="8">
    <source>
        <dbReference type="PDB" id="6XYU"/>
    </source>
</evidence>
<evidence type="ECO:0007829" key="9">
    <source>
        <dbReference type="PDB" id="6XYY"/>
    </source>
</evidence>
<feature type="signal peptide">
    <location>
        <begin position="1"/>
        <end position="38"/>
    </location>
</feature>
<feature type="chain" id="PRO_0000008603" description="Acetylcholinesterase">
    <location>
        <begin position="39"/>
        <end position="619"/>
    </location>
</feature>
<feature type="chain" id="PRO_0000008604" description="Acetylcholinesterase 16 kDa subunit">
    <location>
        <begin position="39"/>
        <end status="unknown"/>
    </location>
</feature>
<feature type="chain" id="PRO_0000008605" description="Acetylcholinesterase 55 kDa subunit">
    <location>
        <begin status="unknown"/>
        <end position="619"/>
    </location>
</feature>
<feature type="propeptide" id="PRO_0000008606" description="Removed in mature form" evidence="1">
    <location>
        <begin position="620"/>
        <end position="649"/>
    </location>
</feature>
<feature type="active site" description="Acyl-ester intermediate">
    <location>
        <position position="276"/>
    </location>
</feature>
<feature type="active site" description="Charge relay system">
    <location>
        <position position="405"/>
    </location>
</feature>
<feature type="active site" description="Charge relay system">
    <location>
        <position position="518"/>
    </location>
</feature>
<feature type="site" description="Not glycosylated" evidence="3">
    <location>
        <position position="569"/>
    </location>
</feature>
<feature type="lipid moiety-binding region" description="GPI-anchor amidated serine" evidence="1">
    <location>
        <position position="619"/>
    </location>
</feature>
<feature type="glycosylation site" description="N-linked (GlcNAc...) asparagine" evidence="3">
    <location>
        <position position="126"/>
    </location>
</feature>
<feature type="glycosylation site" description="N-linked (GlcNAc...) asparagine" evidence="3">
    <location>
        <position position="174"/>
    </location>
</feature>
<feature type="glycosylation site" description="N-linked (GlcNAc...) asparagine" evidence="3">
    <location>
        <position position="331"/>
    </location>
</feature>
<feature type="glycosylation site" description="N-linked (GlcNAc...) asparagine" evidence="3">
    <location>
        <position position="531"/>
    </location>
</feature>
<feature type="disulfide bond">
    <location>
        <begin position="104"/>
        <end position="131"/>
    </location>
</feature>
<feature type="disulfide bond">
    <location>
        <begin position="330"/>
        <end position="345"/>
    </location>
</feature>
<feature type="disulfide bond">
    <location>
        <begin position="480"/>
        <end position="598"/>
    </location>
</feature>
<feature type="disulfide bond" description="Interchain">
    <location>
        <position position="615"/>
    </location>
</feature>
<feature type="mutagenesis site" description="Decrease in apparent molecular weight of 16 kDa subunit." evidence="3">
    <original>N</original>
    <variation>D</variation>
    <location>
        <position position="126"/>
    </location>
</feature>
<feature type="mutagenesis site" description="Decrease in apparent molecular weight of 55 kDa subunit. Decrease in apparent molecular weight of 55 kDa subunit equivalent to the sum of decreases observed with S-174; D-133 and D-331; when associated with D-331 and D-531." evidence="3">
    <original>N</original>
    <variation>S</variation>
    <location>
        <position position="174"/>
    </location>
</feature>
<feature type="mutagenesis site" description="No effect on apparent molecular weight." evidence="3">
    <original>C</original>
    <variation>V</variation>
    <location>
        <position position="328"/>
    </location>
</feature>
<feature type="mutagenesis site" description="Decrease in apparent molecular weight of the 55 kDa subunit. Decrease in apparent molecular weight of 55 kDa subunit equivalent to the sum of individual decreases observed with S-174; D-331 and D-531; when associated with S-174 and D-531." evidence="3">
    <original>N</original>
    <variation>D</variation>
    <location>
        <position position="331"/>
    </location>
</feature>
<feature type="mutagenesis site" description="Decrease in apparent molecular weight of the 55 kDa subunit. Decrease in apparent molecular weight of 55 kDa subunit equivalent to the sum of individual decreases observed with S-174; D-331 and D-531; when associated with S-174 and D-331." evidence="3">
    <original>N</original>
    <variation>D</variation>
    <location>
        <position position="531"/>
    </location>
</feature>
<feature type="mutagenesis site" description="No change in apparent molecular weight of the 55 kDa subunit." evidence="3">
    <original>N</original>
    <variation>D</variation>
    <location>
        <position position="569"/>
    </location>
</feature>
<feature type="mutagenesis site" description="Formation of 75 kDa monomer." evidence="3">
    <original>C</original>
    <variation>R</variation>
    <location>
        <position position="615"/>
    </location>
</feature>
<feature type="sequence conflict" description="In Ref. 3; AAF54915." evidence="6" ref="3">
    <original>G</original>
    <variation>R</variation>
    <location>
        <position position="99"/>
    </location>
</feature>
<feature type="strand" evidence="7">
    <location>
        <begin position="44"/>
        <end position="47"/>
    </location>
</feature>
<feature type="strand" evidence="7">
    <location>
        <begin position="50"/>
        <end position="53"/>
    </location>
</feature>
<feature type="strand" evidence="7">
    <location>
        <begin position="55"/>
        <end position="59"/>
    </location>
</feature>
<feature type="strand" evidence="7">
    <location>
        <begin position="62"/>
        <end position="71"/>
    </location>
</feature>
<feature type="helix" evidence="7">
    <location>
        <begin position="78"/>
        <end position="80"/>
    </location>
</feature>
<feature type="strand" evidence="7">
    <location>
        <begin position="111"/>
        <end position="114"/>
    </location>
</feature>
<feature type="helix" evidence="7">
    <location>
        <begin position="116"/>
        <end position="119"/>
    </location>
</feature>
<feature type="strand" evidence="7">
    <location>
        <begin position="133"/>
        <end position="139"/>
    </location>
</feature>
<feature type="strand" evidence="7">
    <location>
        <begin position="179"/>
        <end position="185"/>
    </location>
</feature>
<feature type="turn" evidence="8">
    <location>
        <begin position="189"/>
        <end position="191"/>
    </location>
</feature>
<feature type="helix" evidence="7">
    <location>
        <begin position="198"/>
        <end position="200"/>
    </location>
</feature>
<feature type="helix" evidence="7">
    <location>
        <begin position="203"/>
        <end position="209"/>
    </location>
</feature>
<feature type="strand" evidence="7">
    <location>
        <begin position="212"/>
        <end position="216"/>
    </location>
</feature>
<feature type="helix" evidence="7">
    <location>
        <begin position="222"/>
        <end position="225"/>
    </location>
</feature>
<feature type="helix" evidence="7">
    <location>
        <begin position="229"/>
        <end position="231"/>
    </location>
</feature>
<feature type="helix" evidence="7">
    <location>
        <begin position="234"/>
        <end position="239"/>
    </location>
</feature>
<feature type="strand" evidence="7">
    <location>
        <begin position="240"/>
        <end position="242"/>
    </location>
</feature>
<feature type="helix" evidence="7">
    <location>
        <begin position="244"/>
        <end position="258"/>
    </location>
</feature>
<feature type="helix" evidence="7">
    <location>
        <begin position="261"/>
        <end position="263"/>
    </location>
</feature>
<feature type="strand" evidence="7">
    <location>
        <begin position="265"/>
        <end position="275"/>
    </location>
</feature>
<feature type="helix" evidence="7">
    <location>
        <begin position="277"/>
        <end position="287"/>
    </location>
</feature>
<feature type="turn" evidence="7">
    <location>
        <begin position="289"/>
        <end position="293"/>
    </location>
</feature>
<feature type="strand" evidence="7">
    <location>
        <begin position="297"/>
        <end position="302"/>
    </location>
</feature>
<feature type="helix" evidence="7">
    <location>
        <begin position="308"/>
        <end position="310"/>
    </location>
</feature>
<feature type="helix" evidence="7">
    <location>
        <begin position="314"/>
        <end position="327"/>
    </location>
</feature>
<feature type="strand" evidence="7">
    <location>
        <begin position="332"/>
        <end position="334"/>
    </location>
</feature>
<feature type="turn" evidence="7">
    <location>
        <begin position="335"/>
        <end position="337"/>
    </location>
</feature>
<feature type="helix" evidence="7">
    <location>
        <begin position="341"/>
        <end position="347"/>
    </location>
</feature>
<feature type="helix" evidence="7">
    <location>
        <begin position="351"/>
        <end position="357"/>
    </location>
</feature>
<feature type="helix" evidence="7">
    <location>
        <begin position="358"/>
        <end position="361"/>
    </location>
</feature>
<feature type="strand" evidence="7">
    <location>
        <begin position="376"/>
        <end position="379"/>
    </location>
</feature>
<feature type="helix" evidence="7">
    <location>
        <begin position="383"/>
        <end position="389"/>
    </location>
</feature>
<feature type="strand" evidence="7">
    <location>
        <begin position="396"/>
        <end position="402"/>
    </location>
</feature>
<feature type="turn" evidence="7">
    <location>
        <begin position="403"/>
        <end position="406"/>
    </location>
</feature>
<feature type="helix" evidence="7">
    <location>
        <begin position="407"/>
        <end position="413"/>
    </location>
</feature>
<feature type="turn" evidence="7">
    <location>
        <begin position="414"/>
        <end position="417"/>
    </location>
</feature>
<feature type="strand" evidence="7">
    <location>
        <begin position="420"/>
        <end position="422"/>
    </location>
</feature>
<feature type="helix" evidence="7">
    <location>
        <begin position="429"/>
        <end position="438"/>
    </location>
</feature>
<feature type="turn" evidence="7">
    <location>
        <begin position="439"/>
        <end position="441"/>
    </location>
</feature>
<feature type="helix" evidence="7">
    <location>
        <begin position="444"/>
        <end position="453"/>
    </location>
</feature>
<feature type="strand" evidence="7">
    <location>
        <begin position="457"/>
        <end position="459"/>
    </location>
</feature>
<feature type="helix" evidence="7">
    <location>
        <begin position="463"/>
        <end position="477"/>
    </location>
</feature>
<feature type="helix" evidence="7">
    <location>
        <begin position="479"/>
        <end position="491"/>
    </location>
</feature>
<feature type="strand" evidence="7">
    <location>
        <begin position="495"/>
        <end position="501"/>
    </location>
</feature>
<feature type="helix" evidence="7">
    <location>
        <begin position="512"/>
        <end position="514"/>
    </location>
</feature>
<feature type="turn" evidence="7">
    <location>
        <begin position="518"/>
        <end position="521"/>
    </location>
</feature>
<feature type="helix" evidence="7">
    <location>
        <begin position="522"/>
        <end position="525"/>
    </location>
</feature>
<feature type="helix" evidence="7">
    <location>
        <begin position="528"/>
        <end position="530"/>
    </location>
</feature>
<feature type="helix" evidence="7">
    <location>
        <begin position="538"/>
        <end position="557"/>
    </location>
</feature>
<feature type="strand" evidence="7">
    <location>
        <begin position="572"/>
        <end position="574"/>
    </location>
</feature>
<feature type="strand" evidence="7">
    <location>
        <begin position="577"/>
        <end position="580"/>
    </location>
</feature>
<feature type="strand" evidence="9">
    <location>
        <begin position="584"/>
        <end position="586"/>
    </location>
</feature>
<feature type="strand" evidence="7">
    <location>
        <begin position="588"/>
        <end position="590"/>
    </location>
</feature>
<feature type="helix" evidence="7">
    <location>
        <begin position="592"/>
        <end position="602"/>
    </location>
</feature>
<feature type="helix" evidence="7">
    <location>
        <begin position="604"/>
        <end position="608"/>
    </location>
</feature>
<keyword id="KW-0002">3D-structure</keyword>
<keyword id="KW-1003">Cell membrane</keyword>
<keyword id="KW-0903">Direct protein sequencing</keyword>
<keyword id="KW-1015">Disulfide bond</keyword>
<keyword id="KW-0325">Glycoprotein</keyword>
<keyword id="KW-0336">GPI-anchor</keyword>
<keyword id="KW-0378">Hydrolase</keyword>
<keyword id="KW-0449">Lipoprotein</keyword>
<keyword id="KW-0472">Membrane</keyword>
<keyword id="KW-0531">Neurotransmitter degradation</keyword>
<keyword id="KW-1185">Reference proteome</keyword>
<keyword id="KW-0719">Serine esterase</keyword>
<keyword id="KW-0732">Signal</keyword>
<keyword id="KW-0770">Synapse</keyword>
<accession>P07140</accession>
<accession>Q9VFY0</accession>
<protein>
    <recommendedName>
        <fullName>Acetylcholinesterase</fullName>
        <shortName>AChE</shortName>
        <ecNumber>3.1.1.7</ecNumber>
    </recommendedName>
    <component>
        <recommendedName>
            <fullName>Acetylcholinesterase 16 kDa subunit</fullName>
        </recommendedName>
    </component>
    <component>
        <recommendedName>
            <fullName>Acetylcholinesterase 55 kDa subunit</fullName>
        </recommendedName>
    </component>
</protein>
<gene>
    <name type="primary">Ace</name>
    <name type="ORF">CG17907</name>
</gene>
<comment type="function">
    <text>Rapidly hydrolyzes choline released into the synapse. It can hydrolyze butyrylthiocholine.</text>
</comment>
<comment type="catalytic activity">
    <reaction>
        <text>acetylcholine + H2O = choline + acetate + H(+)</text>
        <dbReference type="Rhea" id="RHEA:17561"/>
        <dbReference type="ChEBI" id="CHEBI:15354"/>
        <dbReference type="ChEBI" id="CHEBI:15355"/>
        <dbReference type="ChEBI" id="CHEBI:15377"/>
        <dbReference type="ChEBI" id="CHEBI:15378"/>
        <dbReference type="ChEBI" id="CHEBI:30089"/>
        <dbReference type="EC" id="3.1.1.7"/>
    </reaction>
</comment>
<comment type="subunit">
    <text evidence="2 5">Homodimer; disulfide-linked. The active unit is formed by non-covalent association of the 55 kDa and 16 kDa subunits.</text>
</comment>
<comment type="subcellular location">
    <subcellularLocation>
        <location>Synapse</location>
    </subcellularLocation>
    <subcellularLocation>
        <location>Cell membrane</location>
        <topology>Lipid-anchor</topology>
        <topology>GPI-anchor</topology>
    </subcellularLocation>
    <text>Attached to the membrane of the neuronal cholinergic synapses by a GPI-anchor.</text>
</comment>
<comment type="PTM">
    <text evidence="4">Proteolytic cleavage into the 16 kDa subunit and the 55 kDa subunits originates from the hydrophilic peptide, aa 148-180, and is associated with excretion out of the cell.</text>
</comment>
<comment type="PTM">
    <text evidence="3">Neither N-glycosylation nor dimerization is required for enzyme activity or substrate specificity, but protects the protein against proteolytic digestion.</text>
</comment>
<comment type="similarity">
    <text evidence="6">Belongs to the type-B carboxylesterase/lipase family.</text>
</comment>